<accession>P05650</accession>
<keyword id="KW-1185">Reference proteome</keyword>
<keyword id="KW-0690">Ribosome biogenesis</keyword>
<keyword id="KW-0694">RNA-binding</keyword>
<dbReference type="EMBL" id="X02369">
    <property type="protein sequence ID" value="CAA26219.1"/>
    <property type="molecule type" value="Genomic_DNA"/>
</dbReference>
<dbReference type="EMBL" id="D26185">
    <property type="protein sequence ID" value="BAA05239.1"/>
    <property type="molecule type" value="Genomic_DNA"/>
</dbReference>
<dbReference type="EMBL" id="AL009126">
    <property type="protein sequence ID" value="CAB11779.1"/>
    <property type="molecule type" value="Genomic_DNA"/>
</dbReference>
<dbReference type="PIR" id="C22930">
    <property type="entry name" value="C22930"/>
</dbReference>
<dbReference type="RefSeq" id="NP_387884.1">
    <property type="nucleotide sequence ID" value="NC_000964.3"/>
</dbReference>
<dbReference type="RefSeq" id="WP_003226810.1">
    <property type="nucleotide sequence ID" value="NZ_OZ025638.1"/>
</dbReference>
<dbReference type="SMR" id="P05650"/>
<dbReference type="FunCoup" id="P05650">
    <property type="interactions" value="94"/>
</dbReference>
<dbReference type="STRING" id="224308.BSU00030"/>
<dbReference type="PaxDb" id="224308-BSU00030"/>
<dbReference type="EnsemblBacteria" id="CAB11779">
    <property type="protein sequence ID" value="CAB11779"/>
    <property type="gene ID" value="BSU_00030"/>
</dbReference>
<dbReference type="GeneID" id="939444"/>
<dbReference type="KEGG" id="bsu:BSU00030"/>
<dbReference type="PATRIC" id="fig|224308.179.peg.3"/>
<dbReference type="eggNOG" id="COG2501">
    <property type="taxonomic scope" value="Bacteria"/>
</dbReference>
<dbReference type="InParanoid" id="P05650"/>
<dbReference type="OrthoDB" id="9811532at2"/>
<dbReference type="PhylomeDB" id="P05650"/>
<dbReference type="BioCyc" id="BSUB:BSU00030-MONOMER"/>
<dbReference type="Proteomes" id="UP000001570">
    <property type="component" value="Chromosome"/>
</dbReference>
<dbReference type="GO" id="GO:0003723">
    <property type="term" value="F:RNA binding"/>
    <property type="evidence" value="ECO:0007669"/>
    <property type="project" value="UniProtKB-KW"/>
</dbReference>
<dbReference type="GO" id="GO:0042254">
    <property type="term" value="P:ribosome biogenesis"/>
    <property type="evidence" value="ECO:0007669"/>
    <property type="project" value="UniProtKB-KW"/>
</dbReference>
<dbReference type="Gene3D" id="3.10.290.10">
    <property type="entry name" value="RNA-binding S4 domain"/>
    <property type="match status" value="1"/>
</dbReference>
<dbReference type="InterPro" id="IPR014330">
    <property type="entry name" value="RNA-bd_S4-rel_YaaA"/>
</dbReference>
<dbReference type="InterPro" id="IPR036986">
    <property type="entry name" value="S4_RNA-bd_sf"/>
</dbReference>
<dbReference type="NCBIfam" id="TIGR02988">
    <property type="entry name" value="YaaA_near_RecF"/>
    <property type="match status" value="1"/>
</dbReference>
<dbReference type="Pfam" id="PF13275">
    <property type="entry name" value="S4_2"/>
    <property type="match status" value="1"/>
</dbReference>
<dbReference type="SUPFAM" id="SSF55174">
    <property type="entry name" value="Alpha-L RNA-binding motif"/>
    <property type="match status" value="1"/>
</dbReference>
<dbReference type="PROSITE" id="PS50889">
    <property type="entry name" value="S4"/>
    <property type="match status" value="1"/>
</dbReference>
<protein>
    <recommendedName>
        <fullName evidence="3">Probable ribosome maturation protein RlbA</fullName>
    </recommendedName>
</protein>
<reference key="1">
    <citation type="journal article" date="1985" name="Nucleic Acids Res.">
        <title>Structure and function of the region of the replication origin of the Bacillus subtilis chromosome. III. Nucleotide sequence of some 10,000 base pairs in the origin region.</title>
        <authorList>
            <person name="Moriya S."/>
            <person name="Ogasawara N."/>
            <person name="Yoshikawa H."/>
        </authorList>
    </citation>
    <scope>NUCLEOTIDE SEQUENCE [GENOMIC DNA]</scope>
</reference>
<reference key="2">
    <citation type="journal article" date="1994" name="DNA Res.">
        <title>Systematic sequencing of the 180 kilobase region of the Bacillus subtilis chromosome containing the replication origin.</title>
        <authorList>
            <person name="Ogasawara N."/>
            <person name="Nakai S."/>
            <person name="Yoshikawa H."/>
        </authorList>
    </citation>
    <scope>NUCLEOTIDE SEQUENCE [GENOMIC DNA]</scope>
    <source>
        <strain>168</strain>
    </source>
</reference>
<reference key="3">
    <citation type="journal article" date="1997" name="Nature">
        <title>The complete genome sequence of the Gram-positive bacterium Bacillus subtilis.</title>
        <authorList>
            <person name="Kunst F."/>
            <person name="Ogasawara N."/>
            <person name="Moszer I."/>
            <person name="Albertini A.M."/>
            <person name="Alloni G."/>
            <person name="Azevedo V."/>
            <person name="Bertero M.G."/>
            <person name="Bessieres P."/>
            <person name="Bolotin A."/>
            <person name="Borchert S."/>
            <person name="Borriss R."/>
            <person name="Boursier L."/>
            <person name="Brans A."/>
            <person name="Braun M."/>
            <person name="Brignell S.C."/>
            <person name="Bron S."/>
            <person name="Brouillet S."/>
            <person name="Bruschi C.V."/>
            <person name="Caldwell B."/>
            <person name="Capuano V."/>
            <person name="Carter N.M."/>
            <person name="Choi S.-K."/>
            <person name="Codani J.-J."/>
            <person name="Connerton I.F."/>
            <person name="Cummings N.J."/>
            <person name="Daniel R.A."/>
            <person name="Denizot F."/>
            <person name="Devine K.M."/>
            <person name="Duesterhoeft A."/>
            <person name="Ehrlich S.D."/>
            <person name="Emmerson P.T."/>
            <person name="Entian K.-D."/>
            <person name="Errington J."/>
            <person name="Fabret C."/>
            <person name="Ferrari E."/>
            <person name="Foulger D."/>
            <person name="Fritz C."/>
            <person name="Fujita M."/>
            <person name="Fujita Y."/>
            <person name="Fuma S."/>
            <person name="Galizzi A."/>
            <person name="Galleron N."/>
            <person name="Ghim S.-Y."/>
            <person name="Glaser P."/>
            <person name="Goffeau A."/>
            <person name="Golightly E.J."/>
            <person name="Grandi G."/>
            <person name="Guiseppi G."/>
            <person name="Guy B.J."/>
            <person name="Haga K."/>
            <person name="Haiech J."/>
            <person name="Harwood C.R."/>
            <person name="Henaut A."/>
            <person name="Hilbert H."/>
            <person name="Holsappel S."/>
            <person name="Hosono S."/>
            <person name="Hullo M.-F."/>
            <person name="Itaya M."/>
            <person name="Jones L.-M."/>
            <person name="Joris B."/>
            <person name="Karamata D."/>
            <person name="Kasahara Y."/>
            <person name="Klaerr-Blanchard M."/>
            <person name="Klein C."/>
            <person name="Kobayashi Y."/>
            <person name="Koetter P."/>
            <person name="Koningstein G."/>
            <person name="Krogh S."/>
            <person name="Kumano M."/>
            <person name="Kurita K."/>
            <person name="Lapidus A."/>
            <person name="Lardinois S."/>
            <person name="Lauber J."/>
            <person name="Lazarevic V."/>
            <person name="Lee S.-M."/>
            <person name="Levine A."/>
            <person name="Liu H."/>
            <person name="Masuda S."/>
            <person name="Mauel C."/>
            <person name="Medigue C."/>
            <person name="Medina N."/>
            <person name="Mellado R.P."/>
            <person name="Mizuno M."/>
            <person name="Moestl D."/>
            <person name="Nakai S."/>
            <person name="Noback M."/>
            <person name="Noone D."/>
            <person name="O'Reilly M."/>
            <person name="Ogawa K."/>
            <person name="Ogiwara A."/>
            <person name="Oudega B."/>
            <person name="Park S.-H."/>
            <person name="Parro V."/>
            <person name="Pohl T.M."/>
            <person name="Portetelle D."/>
            <person name="Porwollik S."/>
            <person name="Prescott A.M."/>
            <person name="Presecan E."/>
            <person name="Pujic P."/>
            <person name="Purnelle B."/>
            <person name="Rapoport G."/>
            <person name="Rey M."/>
            <person name="Reynolds S."/>
            <person name="Rieger M."/>
            <person name="Rivolta C."/>
            <person name="Rocha E."/>
            <person name="Roche B."/>
            <person name="Rose M."/>
            <person name="Sadaie Y."/>
            <person name="Sato T."/>
            <person name="Scanlan E."/>
            <person name="Schleich S."/>
            <person name="Schroeter R."/>
            <person name="Scoffone F."/>
            <person name="Sekiguchi J."/>
            <person name="Sekowska A."/>
            <person name="Seror S.J."/>
            <person name="Serror P."/>
            <person name="Shin B.-S."/>
            <person name="Soldo B."/>
            <person name="Sorokin A."/>
            <person name="Tacconi E."/>
            <person name="Takagi T."/>
            <person name="Takahashi H."/>
            <person name="Takemaru K."/>
            <person name="Takeuchi M."/>
            <person name="Tamakoshi A."/>
            <person name="Tanaka T."/>
            <person name="Terpstra P."/>
            <person name="Tognoni A."/>
            <person name="Tosato V."/>
            <person name="Uchiyama S."/>
            <person name="Vandenbol M."/>
            <person name="Vannier F."/>
            <person name="Vassarotti A."/>
            <person name="Viari A."/>
            <person name="Wambutt R."/>
            <person name="Wedler E."/>
            <person name="Wedler H."/>
            <person name="Weitzenegger T."/>
            <person name="Winters P."/>
            <person name="Wipat A."/>
            <person name="Yamamoto H."/>
            <person name="Yamane K."/>
            <person name="Yasumoto K."/>
            <person name="Yata K."/>
            <person name="Yoshida K."/>
            <person name="Yoshikawa H.-F."/>
            <person name="Zumstein E."/>
            <person name="Yoshikawa H."/>
            <person name="Danchin A."/>
        </authorList>
    </citation>
    <scope>NUCLEOTIDE SEQUENCE [LARGE SCALE GENOMIC DNA]</scope>
    <source>
        <strain>168</strain>
    </source>
</reference>
<reference key="4">
    <citation type="journal article" date="2014" name="Microbiology">
        <title>Enhanced expression of Bacillus subtilis yaaA can restore both the growth and the sporulation defects caused by mutation of rplB, encoding ribosomal protein L2.</title>
        <authorList>
            <person name="Suzuki S."/>
            <person name="Tanigawa O."/>
            <person name="Akanuma G."/>
            <person name="Nanamiya H."/>
            <person name="Kawamura F."/>
            <person name="Tagami K."/>
            <person name="Nomura N."/>
            <person name="Kawabata T."/>
            <person name="Sekine Y."/>
        </authorList>
    </citation>
    <scope>FUNCTION</scope>
    <scope>DISRUPTION PHENOTYPE</scope>
    <source>
        <strain>168</strain>
    </source>
</reference>
<evidence type="ECO:0000255" key="1">
    <source>
        <dbReference type="PROSITE-ProRule" id="PRU00182"/>
    </source>
</evidence>
<evidence type="ECO:0000269" key="2">
    <source>
    </source>
</evidence>
<evidence type="ECO:0000305" key="3"/>
<evidence type="ECO:0000312" key="4">
    <source>
        <dbReference type="EMBL" id="CAB11779.1"/>
    </source>
</evidence>
<organism>
    <name type="scientific">Bacillus subtilis (strain 168)</name>
    <dbReference type="NCBI Taxonomy" id="224308"/>
    <lineage>
        <taxon>Bacteria</taxon>
        <taxon>Bacillati</taxon>
        <taxon>Bacillota</taxon>
        <taxon>Bacilli</taxon>
        <taxon>Bacillales</taxon>
        <taxon>Bacillaceae</taxon>
        <taxon>Bacillus</taxon>
    </lineage>
</organism>
<comment type="function">
    <text evidence="2">May assist in the assembly of the 50S subunit.</text>
</comment>
<comment type="disruption phenotype">
    <text evidence="2">Disruption of the gene does not affect growth of the cell.</text>
</comment>
<comment type="miscellaneous">
    <text evidence="2">Enhanced expression can restore both growth and sporulation of a temperature-sensitive mutation in rplB, designated rplB142.</text>
</comment>
<sequence length="71" mass="7926">MANPISIDTEMITLGQFLKLADVIQSGGMAKWFLSEHEVLVNDEPDNRRGRKLYVGDVVEIEGFGSFQVVN</sequence>
<proteinExistence type="predicted"/>
<feature type="chain" id="PRO_0000049427" description="Probable ribosome maturation protein RlbA">
    <location>
        <begin position="1"/>
        <end position="71"/>
    </location>
</feature>
<feature type="domain" description="S4 RNA-binding" evidence="1">
    <location>
        <begin position="12"/>
        <end position="69"/>
    </location>
</feature>
<name>RLBA_BACSU</name>
<gene>
    <name evidence="4" type="primary">rlbA</name>
    <name type="synonym">yaaA</name>
    <name type="ordered locus">BSU00030</name>
</gene>